<keyword id="KW-0413">Isomerase</keyword>
<keyword id="KW-0819">tRNA processing</keyword>
<gene>
    <name evidence="1" type="primary">truD</name>
    <name type="ordered locus">BWG_2481</name>
</gene>
<feature type="chain" id="PRO_1000213512" description="tRNA pseudouridine synthase D">
    <location>
        <begin position="1"/>
        <end position="349"/>
    </location>
</feature>
<feature type="domain" description="TRUD" evidence="1">
    <location>
        <begin position="155"/>
        <end position="303"/>
    </location>
</feature>
<feature type="active site" description="Nucleophile" evidence="1">
    <location>
        <position position="80"/>
    </location>
</feature>
<feature type="binding site" evidence="1">
    <location>
        <position position="27"/>
    </location>
    <ligand>
        <name>substrate</name>
    </ligand>
</feature>
<feature type="binding site" evidence="1">
    <location>
        <position position="129"/>
    </location>
    <ligand>
        <name>substrate</name>
    </ligand>
</feature>
<feature type="binding site" evidence="1">
    <location>
        <position position="329"/>
    </location>
    <ligand>
        <name>substrate</name>
    </ligand>
</feature>
<name>TRUD_ECOBW</name>
<organism>
    <name type="scientific">Escherichia coli (strain K12 / MC4100 / BW2952)</name>
    <dbReference type="NCBI Taxonomy" id="595496"/>
    <lineage>
        <taxon>Bacteria</taxon>
        <taxon>Pseudomonadati</taxon>
        <taxon>Pseudomonadota</taxon>
        <taxon>Gammaproteobacteria</taxon>
        <taxon>Enterobacterales</taxon>
        <taxon>Enterobacteriaceae</taxon>
        <taxon>Escherichia</taxon>
    </lineage>
</organism>
<proteinExistence type="inferred from homology"/>
<protein>
    <recommendedName>
        <fullName evidence="1">tRNA pseudouridine synthase D</fullName>
        <ecNumber evidence="1">5.4.99.27</ecNumber>
    </recommendedName>
    <alternativeName>
        <fullName evidence="1">tRNA pseudouridine(13) synthase</fullName>
    </alternativeName>
    <alternativeName>
        <fullName evidence="1">tRNA pseudouridylate synthase D</fullName>
    </alternativeName>
    <alternativeName>
        <fullName evidence="1">tRNA-uridine isomerase D</fullName>
    </alternativeName>
</protein>
<dbReference type="EC" id="5.4.99.27" evidence="1"/>
<dbReference type="EMBL" id="CP001396">
    <property type="protein sequence ID" value="ACR65328.1"/>
    <property type="molecule type" value="Genomic_DNA"/>
</dbReference>
<dbReference type="RefSeq" id="WP_000568943.1">
    <property type="nucleotide sequence ID" value="NC_012759.1"/>
</dbReference>
<dbReference type="SMR" id="C4ZZP9"/>
<dbReference type="GeneID" id="75205606"/>
<dbReference type="KEGG" id="ebw:BWG_2481"/>
<dbReference type="HOGENOM" id="CLU_005281_4_0_6"/>
<dbReference type="GO" id="GO:0005829">
    <property type="term" value="C:cytosol"/>
    <property type="evidence" value="ECO:0007669"/>
    <property type="project" value="TreeGrafter"/>
</dbReference>
<dbReference type="GO" id="GO:0003723">
    <property type="term" value="F:RNA binding"/>
    <property type="evidence" value="ECO:0007669"/>
    <property type="project" value="InterPro"/>
</dbReference>
<dbReference type="GO" id="GO:0160150">
    <property type="term" value="F:tRNA pseudouridine(13) synthase activity"/>
    <property type="evidence" value="ECO:0007669"/>
    <property type="project" value="UniProtKB-EC"/>
</dbReference>
<dbReference type="GO" id="GO:0031119">
    <property type="term" value="P:tRNA pseudouridine synthesis"/>
    <property type="evidence" value="ECO:0007669"/>
    <property type="project" value="UniProtKB-UniRule"/>
</dbReference>
<dbReference type="CDD" id="cd02575">
    <property type="entry name" value="PseudoU_synth_EcTruD"/>
    <property type="match status" value="1"/>
</dbReference>
<dbReference type="FunFam" id="3.30.2340.10:FF:000001">
    <property type="entry name" value="tRNA pseudouridine synthase D"/>
    <property type="match status" value="1"/>
</dbReference>
<dbReference type="FunFam" id="3.30.2350.20:FF:000001">
    <property type="entry name" value="tRNA pseudouridine synthase D"/>
    <property type="match status" value="1"/>
</dbReference>
<dbReference type="Gene3D" id="3.30.2350.20">
    <property type="entry name" value="TruD, catalytic domain"/>
    <property type="match status" value="1"/>
</dbReference>
<dbReference type="Gene3D" id="3.30.2340.10">
    <property type="entry name" value="TruD, insertion domain"/>
    <property type="match status" value="1"/>
</dbReference>
<dbReference type="HAMAP" id="MF_01082">
    <property type="entry name" value="TruD"/>
    <property type="match status" value="1"/>
</dbReference>
<dbReference type="InterPro" id="IPR020103">
    <property type="entry name" value="PsdUridine_synth_cat_dom_sf"/>
</dbReference>
<dbReference type="InterPro" id="IPR001656">
    <property type="entry name" value="PsdUridine_synth_TruD"/>
</dbReference>
<dbReference type="InterPro" id="IPR020119">
    <property type="entry name" value="PsdUridine_synth_TruD_CS"/>
</dbReference>
<dbReference type="InterPro" id="IPR011760">
    <property type="entry name" value="PsdUridine_synth_TruD_insert"/>
</dbReference>
<dbReference type="InterPro" id="IPR042214">
    <property type="entry name" value="TruD_catalytic"/>
</dbReference>
<dbReference type="InterPro" id="IPR043165">
    <property type="entry name" value="TruD_insert_sf"/>
</dbReference>
<dbReference type="InterPro" id="IPR050170">
    <property type="entry name" value="TruD_pseudoU_synthase"/>
</dbReference>
<dbReference type="NCBIfam" id="NF002155">
    <property type="entry name" value="PRK00984.1-4"/>
    <property type="match status" value="1"/>
</dbReference>
<dbReference type="NCBIfam" id="TIGR00094">
    <property type="entry name" value="tRNA_TruD_broad"/>
    <property type="match status" value="1"/>
</dbReference>
<dbReference type="PANTHER" id="PTHR47811">
    <property type="entry name" value="TRNA PSEUDOURIDINE SYNTHASE D"/>
    <property type="match status" value="1"/>
</dbReference>
<dbReference type="PANTHER" id="PTHR47811:SF1">
    <property type="entry name" value="TRNA PSEUDOURIDINE SYNTHASE D"/>
    <property type="match status" value="1"/>
</dbReference>
<dbReference type="Pfam" id="PF01142">
    <property type="entry name" value="TruD"/>
    <property type="match status" value="2"/>
</dbReference>
<dbReference type="SUPFAM" id="SSF55120">
    <property type="entry name" value="Pseudouridine synthase"/>
    <property type="match status" value="1"/>
</dbReference>
<dbReference type="PROSITE" id="PS50984">
    <property type="entry name" value="TRUD"/>
    <property type="match status" value="1"/>
</dbReference>
<dbReference type="PROSITE" id="PS01268">
    <property type="entry name" value="UPF0024"/>
    <property type="match status" value="1"/>
</dbReference>
<accession>C4ZZP9</accession>
<reference key="1">
    <citation type="journal article" date="2009" name="J. Bacteriol.">
        <title>Genomic sequencing reveals regulatory mutations and recombinational events in the widely used MC4100 lineage of Escherichia coli K-12.</title>
        <authorList>
            <person name="Ferenci T."/>
            <person name="Zhou Z."/>
            <person name="Betteridge T."/>
            <person name="Ren Y."/>
            <person name="Liu Y."/>
            <person name="Feng L."/>
            <person name="Reeves P.R."/>
            <person name="Wang L."/>
        </authorList>
    </citation>
    <scope>NUCLEOTIDE SEQUENCE [LARGE SCALE GENOMIC DNA]</scope>
    <source>
        <strain>K12 / MC4100 / BW2952</strain>
    </source>
</reference>
<sequence>MIEFDNLTYLHGKPQGTGLLKANPEDFVVVEDLGFEPDGEGEHILVRILKNGCNTRFVADALAKFLKIHAREVSFAGQKDKHAVTEQWLCARVPGKEMPDLSAFQLEGCQVLEYARHKRKLRLGALKGNAFTLVLREVSNRDDVEQRLIDICVKGVPNYFGAQRFGIGGSNLQGAQRWAQTNTPVRDRNKRSFWLSAARSALFNQIVAERLKKADVNQVVDGDALQLAGRGSWFVATTEELAELQRRVNDKELMITAALPGSGEWGTQREALAFEQAAVAAETELQALLVREKVEAARRAMLLYPQQLSWNWWDDVTVEIRFWLPAGSFATSVVRELINTTGDYAHIAE</sequence>
<comment type="function">
    <text evidence="1">Responsible for synthesis of pseudouridine from uracil-13 in transfer RNAs.</text>
</comment>
<comment type="catalytic activity">
    <reaction evidence="1">
        <text>uridine(13) in tRNA = pseudouridine(13) in tRNA</text>
        <dbReference type="Rhea" id="RHEA:42540"/>
        <dbReference type="Rhea" id="RHEA-COMP:10105"/>
        <dbReference type="Rhea" id="RHEA-COMP:10106"/>
        <dbReference type="ChEBI" id="CHEBI:65314"/>
        <dbReference type="ChEBI" id="CHEBI:65315"/>
        <dbReference type="EC" id="5.4.99.27"/>
    </reaction>
</comment>
<comment type="similarity">
    <text evidence="1">Belongs to the pseudouridine synthase TruD family.</text>
</comment>
<evidence type="ECO:0000255" key="1">
    <source>
        <dbReference type="HAMAP-Rule" id="MF_01082"/>
    </source>
</evidence>